<name>ICMTB_ARATH</name>
<proteinExistence type="evidence at protein level"/>
<accession>Q93W54</accession>
<accession>Q9FTA1</accession>
<sequence>MTEIFSDTGFRQLTQMFLAIIFFHTSEYILAIAIHGASKVTLSSLLISKHYALAMLISVLEYIAEIVFFPGLKQHWWISNFGLTMIILGEILRKTAIITAGRSFTHLIKIRREEHHKLVTEGVYQIMRHPSYSGFLIWSVGTQVMLCNPISAIAFAVVVWRFFAERIPYEEHYLKQFFGRQYVEYAQRVPSGVPFVN</sequence>
<organism>
    <name type="scientific">Arabidopsis thaliana</name>
    <name type="common">Mouse-ear cress</name>
    <dbReference type="NCBI Taxonomy" id="3702"/>
    <lineage>
        <taxon>Eukaryota</taxon>
        <taxon>Viridiplantae</taxon>
        <taxon>Streptophyta</taxon>
        <taxon>Embryophyta</taxon>
        <taxon>Tracheophyta</taxon>
        <taxon>Spermatophyta</taxon>
        <taxon>Magnoliopsida</taxon>
        <taxon>eudicotyledons</taxon>
        <taxon>Gunneridae</taxon>
        <taxon>Pentapetalae</taxon>
        <taxon>rosids</taxon>
        <taxon>malvids</taxon>
        <taxon>Brassicales</taxon>
        <taxon>Brassicaceae</taxon>
        <taxon>Camelineae</taxon>
        <taxon>Arabidopsis</taxon>
    </lineage>
</organism>
<feature type="chain" id="PRO_0000356250" description="Protein-S-isoprenylcysteine O-methyltransferase B">
    <location>
        <begin position="1"/>
        <end position="197"/>
    </location>
</feature>
<feature type="transmembrane region" description="Helical" evidence="4">
    <location>
        <begin position="16"/>
        <end position="36"/>
    </location>
</feature>
<feature type="transmembrane region" description="Helical" evidence="4">
    <location>
        <begin position="52"/>
        <end position="72"/>
    </location>
</feature>
<feature type="transmembrane region" description="Helical" evidence="4">
    <location>
        <begin position="81"/>
        <end position="101"/>
    </location>
</feature>
<feature type="transmembrane region" description="Helical" evidence="4">
    <location>
        <begin position="140"/>
        <end position="160"/>
    </location>
</feature>
<feature type="binding site" evidence="3">
    <location>
        <begin position="116"/>
        <end position="119"/>
    </location>
    <ligand>
        <name>S-adenosyl-L-methionine</name>
        <dbReference type="ChEBI" id="CHEBI:59789"/>
    </ligand>
</feature>
<feature type="binding site" evidence="3">
    <location>
        <position position="124"/>
    </location>
    <ligand>
        <name>S-adenosyl-L-methionine</name>
        <dbReference type="ChEBI" id="CHEBI:59789"/>
    </ligand>
</feature>
<feature type="binding site" evidence="3">
    <location>
        <begin position="129"/>
        <end position="132"/>
    </location>
    <ligand>
        <name>S-adenosyl-L-methionine</name>
        <dbReference type="ChEBI" id="CHEBI:59789"/>
    </ligand>
</feature>
<feature type="binding site" evidence="2">
    <location>
        <position position="166"/>
    </location>
    <ligand>
        <name>substrate</name>
    </ligand>
</feature>
<feature type="binding site" evidence="3">
    <location>
        <position position="170"/>
    </location>
    <ligand>
        <name>S-adenosyl-L-methionine</name>
        <dbReference type="ChEBI" id="CHEBI:59789"/>
    </ligand>
</feature>
<comment type="function">
    <text evidence="5 7">Catalyzes the post-translational methylation of isoprenylated C-terminal cysteine residues, resulting in the modulation of the function of prenylated proteins. Involved in negative regulation of abscisic acid signaling. Carboxyl methylation is a reversible and potentially regulated step in the post-translational modification of prenylated proteins.</text>
</comment>
<comment type="catalytic activity">
    <reaction evidence="5">
        <text>[protein]-C-terminal S-[(2E,6E)-farnesyl]-L-cysteine + S-adenosyl-L-methionine = [protein]-C-terminal S-[(2E,6E)-farnesyl]-L-cysteine methyl ester + S-adenosyl-L-homocysteine</text>
        <dbReference type="Rhea" id="RHEA:21672"/>
        <dbReference type="Rhea" id="RHEA-COMP:12125"/>
        <dbReference type="Rhea" id="RHEA-COMP:12126"/>
        <dbReference type="ChEBI" id="CHEBI:57856"/>
        <dbReference type="ChEBI" id="CHEBI:59789"/>
        <dbReference type="ChEBI" id="CHEBI:90510"/>
        <dbReference type="ChEBI" id="CHEBI:90511"/>
        <dbReference type="EC" id="2.1.1.100"/>
    </reaction>
</comment>
<comment type="cofactor">
    <cofactor evidence="1">
        <name>Zn(2+)</name>
        <dbReference type="ChEBI" id="CHEBI:29105"/>
    </cofactor>
    <text evidence="1">Divalent metal cations. Probably Zn(2+).</text>
</comment>
<comment type="activity regulation">
    <text evidence="5">Inhibited by farnesylthioacetic acid (FTAA) and N-acetyl-S-trans, trans-farnesyl-l-cysteine (AFC).</text>
</comment>
<comment type="biophysicochemical properties">
    <kinetics>
        <KM evidence="5">5 uM for AFC as methyl acceptor</KM>
        <KM evidence="5">3 uM for AGGC as methyl acceptor</KM>
        <Vmax evidence="5">220.0 pmol/min/mg enzyme toward AFC as methyl acceptor</Vmax>
        <Vmax evidence="5">296.0 pmol/min/mg enzyme toward AGGC as methyl acceptor</Vmax>
    </kinetics>
</comment>
<comment type="subcellular location">
    <subcellularLocation>
        <location evidence="6">Endoplasmic reticulum membrane</location>
        <topology evidence="6">Multi-pass membrane protein</topology>
    </subcellularLocation>
</comment>
<comment type="tissue specificity">
    <text evidence="5">Expressed in flowers, stems, leaves, roots and siliques. Detected in apices and vascular tissues of leaves and roots, in the stigma and in the filaments and anthers of stamen. Not found in petioles or hypocotyls.</text>
</comment>
<comment type="induction">
    <text evidence="7">Not induced by abscisic acid or auxin.</text>
</comment>
<comment type="disruption phenotype">
    <text evidence="6">Plants lacking ICMTA and ICMTB have altered phyllotaxis, fasciated stems and development of axillary flowers.</text>
</comment>
<comment type="miscellaneous">
    <text evidence="6">ICMTB is more widely expressed and has a higher catalytic activity than ICMTA.</text>
</comment>
<comment type="similarity">
    <text evidence="10">Belongs to the class VI-like SAM-binding methyltransferase superfamily. Isoprenylcysteine carboxyl methyltransferase family.</text>
</comment>
<comment type="sequence caution" evidence="10">
    <conflict type="erroneous gene model prediction">
        <sequence resource="EMBL-CDS" id="CAC08334"/>
    </conflict>
</comment>
<gene>
    <name evidence="9" type="primary">ICMTB</name>
    <name evidence="8" type="synonym">STE14B</name>
    <name evidence="11" type="ordered locus">At5g08335</name>
    <name evidence="12" type="ORF">F8L15.70</name>
</gene>
<dbReference type="EC" id="2.1.1.100" evidence="5"/>
<dbReference type="EMBL" id="AL392174">
    <property type="protein sequence ID" value="CAC08334.1"/>
    <property type="status" value="ALT_SEQ"/>
    <property type="molecule type" value="Genomic_DNA"/>
</dbReference>
<dbReference type="EMBL" id="CP002688">
    <property type="protein sequence ID" value="AED91285.1"/>
    <property type="molecule type" value="Genomic_DNA"/>
</dbReference>
<dbReference type="EMBL" id="CP002688">
    <property type="protein sequence ID" value="ANM69655.1"/>
    <property type="molecule type" value="Genomic_DNA"/>
</dbReference>
<dbReference type="EMBL" id="AY035028">
    <property type="protein sequence ID" value="AAK59533.1"/>
    <property type="molecule type" value="mRNA"/>
</dbReference>
<dbReference type="EMBL" id="AY059102">
    <property type="protein sequence ID" value="AAL15208.1"/>
    <property type="molecule type" value="mRNA"/>
</dbReference>
<dbReference type="SMR" id="Q93W54"/>
<dbReference type="BioGRID" id="16009">
    <property type="interactions" value="2"/>
</dbReference>
<dbReference type="FunCoup" id="Q93W54">
    <property type="interactions" value="2468"/>
</dbReference>
<dbReference type="IntAct" id="Q93W54">
    <property type="interactions" value="2"/>
</dbReference>
<dbReference type="STRING" id="3702.Q93W54"/>
<dbReference type="PaxDb" id="3702-AT5G08335.1"/>
<dbReference type="ProteomicsDB" id="228765"/>
<dbReference type="EnsemblPlants" id="AT5G08335.1">
    <property type="protein sequence ID" value="AT5G08335.1"/>
    <property type="gene ID" value="AT5G08335"/>
</dbReference>
<dbReference type="EnsemblPlants" id="AT5G08335.2">
    <property type="protein sequence ID" value="AT5G08335.2"/>
    <property type="gene ID" value="AT5G08335"/>
</dbReference>
<dbReference type="GeneID" id="830731"/>
<dbReference type="Gramene" id="AT5G08335.1">
    <property type="protein sequence ID" value="AT5G08335.1"/>
    <property type="gene ID" value="AT5G08335"/>
</dbReference>
<dbReference type="Gramene" id="AT5G08335.2">
    <property type="protein sequence ID" value="AT5G08335.2"/>
    <property type="gene ID" value="AT5G08335"/>
</dbReference>
<dbReference type="KEGG" id="ath:AT5G08335"/>
<dbReference type="Araport" id="AT5G08335"/>
<dbReference type="TAIR" id="AT5G08335">
    <property type="gene designation" value="ATSTE14B"/>
</dbReference>
<dbReference type="eggNOG" id="KOG2628">
    <property type="taxonomic scope" value="Eukaryota"/>
</dbReference>
<dbReference type="HOGENOM" id="CLU_065200_0_2_1"/>
<dbReference type="InParanoid" id="Q93W54"/>
<dbReference type="OMA" id="IKREEAY"/>
<dbReference type="OrthoDB" id="422086at2759"/>
<dbReference type="PhylomeDB" id="Q93W54"/>
<dbReference type="BioCyc" id="MetaCyc:AT5G08335-MONOMER"/>
<dbReference type="BRENDA" id="2.1.1.100">
    <property type="organism ID" value="399"/>
</dbReference>
<dbReference type="SABIO-RK" id="Q93W54"/>
<dbReference type="PRO" id="PR:Q93W54"/>
<dbReference type="Proteomes" id="UP000006548">
    <property type="component" value="Chromosome 5"/>
</dbReference>
<dbReference type="ExpressionAtlas" id="Q93W54">
    <property type="expression patterns" value="baseline and differential"/>
</dbReference>
<dbReference type="GO" id="GO:0005783">
    <property type="term" value="C:endoplasmic reticulum"/>
    <property type="evidence" value="ECO:0000314"/>
    <property type="project" value="TAIR"/>
</dbReference>
<dbReference type="GO" id="GO:0005789">
    <property type="term" value="C:endoplasmic reticulum membrane"/>
    <property type="evidence" value="ECO:0007669"/>
    <property type="project" value="UniProtKB-SubCell"/>
</dbReference>
<dbReference type="GO" id="GO:0004671">
    <property type="term" value="F:protein C-terminal S-isoprenylcysteine carboxyl O-methyltransferase activity"/>
    <property type="evidence" value="ECO:0000314"/>
    <property type="project" value="TAIR"/>
</dbReference>
<dbReference type="GO" id="GO:0009908">
    <property type="term" value="P:flower development"/>
    <property type="evidence" value="ECO:0000315"/>
    <property type="project" value="TAIR"/>
</dbReference>
<dbReference type="GO" id="GO:0032259">
    <property type="term" value="P:methylation"/>
    <property type="evidence" value="ECO:0007669"/>
    <property type="project" value="UniProtKB-KW"/>
</dbReference>
<dbReference type="GO" id="GO:0009788">
    <property type="term" value="P:negative regulation of abscisic acid-activated signaling pathway"/>
    <property type="evidence" value="ECO:0000303"/>
    <property type="project" value="TAIR"/>
</dbReference>
<dbReference type="GO" id="GO:0048367">
    <property type="term" value="P:shoot system development"/>
    <property type="evidence" value="ECO:0000315"/>
    <property type="project" value="TAIR"/>
</dbReference>
<dbReference type="FunFam" id="1.20.120.1630:FF:000007">
    <property type="entry name" value="Protein-S-isoprenylcysteine O-methyltransferase"/>
    <property type="match status" value="1"/>
</dbReference>
<dbReference type="Gene3D" id="1.20.120.1630">
    <property type="match status" value="1"/>
</dbReference>
<dbReference type="InterPro" id="IPR007269">
    <property type="entry name" value="ICMT_MeTrfase"/>
</dbReference>
<dbReference type="InterPro" id="IPR025770">
    <property type="entry name" value="PPMT_MeTrfase"/>
</dbReference>
<dbReference type="PANTHER" id="PTHR12714">
    <property type="entry name" value="PROTEIN-S ISOPRENYLCYSTEINE O-METHYLTRANSFERASE"/>
    <property type="match status" value="1"/>
</dbReference>
<dbReference type="PANTHER" id="PTHR12714:SF9">
    <property type="entry name" value="PROTEIN-S-ISOPRENYLCYSTEINE O-METHYLTRANSFERASE"/>
    <property type="match status" value="1"/>
</dbReference>
<dbReference type="Pfam" id="PF04140">
    <property type="entry name" value="ICMT"/>
    <property type="match status" value="1"/>
</dbReference>
<dbReference type="PROSITE" id="PS51564">
    <property type="entry name" value="SAM_ICMT"/>
    <property type="match status" value="1"/>
</dbReference>
<keyword id="KW-0256">Endoplasmic reticulum</keyword>
<keyword id="KW-0472">Membrane</keyword>
<keyword id="KW-0489">Methyltransferase</keyword>
<keyword id="KW-1185">Reference proteome</keyword>
<keyword id="KW-0949">S-adenosyl-L-methionine</keyword>
<keyword id="KW-0808">Transferase</keyword>
<keyword id="KW-0812">Transmembrane</keyword>
<keyword id="KW-1133">Transmembrane helix</keyword>
<evidence type="ECO:0000250" key="1"/>
<evidence type="ECO:0000250" key="2">
    <source>
        <dbReference type="UniProtKB" id="D6WJ77"/>
    </source>
</evidence>
<evidence type="ECO:0000250" key="3">
    <source>
        <dbReference type="UniProtKB" id="Q8TMG0"/>
    </source>
</evidence>
<evidence type="ECO:0000255" key="4"/>
<evidence type="ECO:0000269" key="5">
    <source>
    </source>
</evidence>
<evidence type="ECO:0000269" key="6">
    <source>
    </source>
</evidence>
<evidence type="ECO:0000269" key="7">
    <source>
    </source>
</evidence>
<evidence type="ECO:0000303" key="8">
    <source>
    </source>
</evidence>
<evidence type="ECO:0000303" key="9">
    <source>
    </source>
</evidence>
<evidence type="ECO:0000305" key="10"/>
<evidence type="ECO:0000312" key="11">
    <source>
        <dbReference type="Araport" id="AT5G08335"/>
    </source>
</evidence>
<evidence type="ECO:0000312" key="12">
    <source>
        <dbReference type="EMBL" id="CAC08334.1"/>
    </source>
</evidence>
<protein>
    <recommendedName>
        <fullName evidence="8">Protein-S-isoprenylcysteine O-methyltransferase B</fullName>
        <shortName evidence="9">AtICMTB</shortName>
        <ecNumber evidence="5">2.1.1.100</ecNumber>
    </recommendedName>
    <alternativeName>
        <fullName evidence="8">Isoprenylcysteine carboxylmethyltransferase B</fullName>
    </alternativeName>
    <alternativeName>
        <fullName evidence="8">Prenylated protein carboxyl methyltransferase B</fullName>
    </alternativeName>
    <alternativeName>
        <fullName evidence="8">Prenylcysteine carboxyl methyltransferase 14 B</fullName>
        <shortName evidence="8">AtSTE14B</shortName>
    </alternativeName>
</protein>
<reference key="1">
    <citation type="journal article" date="2002" name="Plant J.">
        <title>Prenylcysteine alpha-carboxyl methyltransferase expression and function in Arabidopsis thaliana.</title>
        <authorList>
            <person name="Narasimha Chary S."/>
            <person name="Bultema R.L."/>
            <person name="Packard C.E."/>
            <person name="Crowell D.N."/>
        </authorList>
    </citation>
    <scope>NUCLEOTIDE SEQUENCE [MRNA]</scope>
    <scope>FUNCTION</scope>
    <scope>BIOPHYSICOCHEMICAL PROPERTIES</scope>
    <scope>CATALYTIC ACTIVITY</scope>
    <scope>TISSUE SPECIFICITY</scope>
    <scope>ACTIVITY REGULATION</scope>
    <source>
        <strain>cv. Columbia</strain>
    </source>
</reference>
<reference key="2">
    <citation type="journal article" date="2000" name="Nature">
        <title>Sequence and analysis of chromosome 5 of the plant Arabidopsis thaliana.</title>
        <authorList>
            <person name="Tabata S."/>
            <person name="Kaneko T."/>
            <person name="Nakamura Y."/>
            <person name="Kotani H."/>
            <person name="Kato T."/>
            <person name="Asamizu E."/>
            <person name="Miyajima N."/>
            <person name="Sasamoto S."/>
            <person name="Kimura T."/>
            <person name="Hosouchi T."/>
            <person name="Kawashima K."/>
            <person name="Kohara M."/>
            <person name="Matsumoto M."/>
            <person name="Matsuno A."/>
            <person name="Muraki A."/>
            <person name="Nakayama S."/>
            <person name="Nakazaki N."/>
            <person name="Naruo K."/>
            <person name="Okumura S."/>
            <person name="Shinpo S."/>
            <person name="Takeuchi C."/>
            <person name="Wada T."/>
            <person name="Watanabe A."/>
            <person name="Yamada M."/>
            <person name="Yasuda M."/>
            <person name="Sato S."/>
            <person name="de la Bastide M."/>
            <person name="Huang E."/>
            <person name="Spiegel L."/>
            <person name="Gnoj L."/>
            <person name="O'Shaughnessy A."/>
            <person name="Preston R."/>
            <person name="Habermann K."/>
            <person name="Murray J."/>
            <person name="Johnson D."/>
            <person name="Rohlfing T."/>
            <person name="Nelson J."/>
            <person name="Stoneking T."/>
            <person name="Pepin K."/>
            <person name="Spieth J."/>
            <person name="Sekhon M."/>
            <person name="Armstrong J."/>
            <person name="Becker M."/>
            <person name="Belter E."/>
            <person name="Cordum H."/>
            <person name="Cordes M."/>
            <person name="Courtney L."/>
            <person name="Courtney W."/>
            <person name="Dante M."/>
            <person name="Du H."/>
            <person name="Edwards J."/>
            <person name="Fryman J."/>
            <person name="Haakensen B."/>
            <person name="Lamar E."/>
            <person name="Latreille P."/>
            <person name="Leonard S."/>
            <person name="Meyer R."/>
            <person name="Mulvaney E."/>
            <person name="Ozersky P."/>
            <person name="Riley A."/>
            <person name="Strowmatt C."/>
            <person name="Wagner-McPherson C."/>
            <person name="Wollam A."/>
            <person name="Yoakum M."/>
            <person name="Bell M."/>
            <person name="Dedhia N."/>
            <person name="Parnell L."/>
            <person name="Shah R."/>
            <person name="Rodriguez M."/>
            <person name="Hoon See L."/>
            <person name="Vil D."/>
            <person name="Baker J."/>
            <person name="Kirchoff K."/>
            <person name="Toth K."/>
            <person name="King L."/>
            <person name="Bahret A."/>
            <person name="Miller B."/>
            <person name="Marra M.A."/>
            <person name="Martienssen R."/>
            <person name="McCombie W.R."/>
            <person name="Wilson R.K."/>
            <person name="Murphy G."/>
            <person name="Bancroft I."/>
            <person name="Volckaert G."/>
            <person name="Wambutt R."/>
            <person name="Duesterhoeft A."/>
            <person name="Stiekema W."/>
            <person name="Pohl T."/>
            <person name="Entian K.-D."/>
            <person name="Terryn N."/>
            <person name="Hartley N."/>
            <person name="Bent E."/>
            <person name="Johnson S."/>
            <person name="Langham S.-A."/>
            <person name="McCullagh B."/>
            <person name="Robben J."/>
            <person name="Grymonprez B."/>
            <person name="Zimmermann W."/>
            <person name="Ramsperger U."/>
            <person name="Wedler H."/>
            <person name="Balke K."/>
            <person name="Wedler E."/>
            <person name="Peters S."/>
            <person name="van Staveren M."/>
            <person name="Dirkse W."/>
            <person name="Mooijman P."/>
            <person name="Klein Lankhorst R."/>
            <person name="Weitzenegger T."/>
            <person name="Bothe G."/>
            <person name="Rose M."/>
            <person name="Hauf J."/>
            <person name="Berneiser S."/>
            <person name="Hempel S."/>
            <person name="Feldpausch M."/>
            <person name="Lamberth S."/>
            <person name="Villarroel R."/>
            <person name="Gielen J."/>
            <person name="Ardiles W."/>
            <person name="Bents O."/>
            <person name="Lemcke K."/>
            <person name="Kolesov G."/>
            <person name="Mayer K.F.X."/>
            <person name="Rudd S."/>
            <person name="Schoof H."/>
            <person name="Schueller C."/>
            <person name="Zaccaria P."/>
            <person name="Mewes H.-W."/>
            <person name="Bevan M."/>
            <person name="Fransz P.F."/>
        </authorList>
    </citation>
    <scope>NUCLEOTIDE SEQUENCE [LARGE SCALE GENOMIC DNA]</scope>
    <source>
        <strain>cv. Columbia</strain>
    </source>
</reference>
<reference key="3">
    <citation type="journal article" date="2017" name="Plant J.">
        <title>Araport11: a complete reannotation of the Arabidopsis thaliana reference genome.</title>
        <authorList>
            <person name="Cheng C.Y."/>
            <person name="Krishnakumar V."/>
            <person name="Chan A.P."/>
            <person name="Thibaud-Nissen F."/>
            <person name="Schobel S."/>
            <person name="Town C.D."/>
        </authorList>
    </citation>
    <scope>GENOME REANNOTATION</scope>
    <source>
        <strain>cv. Columbia</strain>
    </source>
</reference>
<reference key="4">
    <citation type="journal article" date="2003" name="Science">
        <title>Empirical analysis of transcriptional activity in the Arabidopsis genome.</title>
        <authorList>
            <person name="Yamada K."/>
            <person name="Lim J."/>
            <person name="Dale J.M."/>
            <person name="Chen H."/>
            <person name="Shinn P."/>
            <person name="Palm C.J."/>
            <person name="Southwick A.M."/>
            <person name="Wu H.C."/>
            <person name="Kim C.J."/>
            <person name="Nguyen M."/>
            <person name="Pham P.K."/>
            <person name="Cheuk R.F."/>
            <person name="Karlin-Newmann G."/>
            <person name="Liu S.X."/>
            <person name="Lam B."/>
            <person name="Sakano H."/>
            <person name="Wu T."/>
            <person name="Yu G."/>
            <person name="Miranda M."/>
            <person name="Quach H.L."/>
            <person name="Tripp M."/>
            <person name="Chang C.H."/>
            <person name="Lee J.M."/>
            <person name="Toriumi M.J."/>
            <person name="Chan M.M."/>
            <person name="Tang C.C."/>
            <person name="Onodera C.S."/>
            <person name="Deng J.M."/>
            <person name="Akiyama K."/>
            <person name="Ansari Y."/>
            <person name="Arakawa T."/>
            <person name="Banh J."/>
            <person name="Banno F."/>
            <person name="Bowser L."/>
            <person name="Brooks S.Y."/>
            <person name="Carninci P."/>
            <person name="Chao Q."/>
            <person name="Choy N."/>
            <person name="Enju A."/>
            <person name="Goldsmith A.D."/>
            <person name="Gurjal M."/>
            <person name="Hansen N.F."/>
            <person name="Hayashizaki Y."/>
            <person name="Johnson-Hopson C."/>
            <person name="Hsuan V.W."/>
            <person name="Iida K."/>
            <person name="Karnes M."/>
            <person name="Khan S."/>
            <person name="Koesema E."/>
            <person name="Ishida J."/>
            <person name="Jiang P.X."/>
            <person name="Jones T."/>
            <person name="Kawai J."/>
            <person name="Kamiya A."/>
            <person name="Meyers C."/>
            <person name="Nakajima M."/>
            <person name="Narusaka M."/>
            <person name="Seki M."/>
            <person name="Sakurai T."/>
            <person name="Satou M."/>
            <person name="Tamse R."/>
            <person name="Vaysberg M."/>
            <person name="Wallender E.K."/>
            <person name="Wong C."/>
            <person name="Yamamura Y."/>
            <person name="Yuan S."/>
            <person name="Shinozaki K."/>
            <person name="Davis R.W."/>
            <person name="Theologis A."/>
            <person name="Ecker J.R."/>
        </authorList>
    </citation>
    <scope>NUCLEOTIDE SEQUENCE [LARGE SCALE MRNA]</scope>
    <source>
        <strain>cv. Columbia</strain>
    </source>
</reference>
<reference key="5">
    <citation type="journal article" date="2008" name="Plant Physiol.">
        <title>Functional analysis of Arabidopsis postprenylation CaaX processing enzymes and their function in subcellular protein targeting.</title>
        <authorList>
            <person name="Bracha-Drori K."/>
            <person name="Shichrur K."/>
            <person name="Lubetzky T.C."/>
            <person name="Yalovsky S."/>
        </authorList>
    </citation>
    <scope>SUBCELLULAR LOCATION</scope>
    <scope>DISRUPTION PHENOTYPE</scope>
</reference>
<reference key="6">
    <citation type="journal article" date="2008" name="Plant Cell">
        <title>Isoprenylcysteine methylation and demethylation regulate abscisic acid signaling in Arabidopsis.</title>
        <authorList>
            <person name="Huizinga D.H."/>
            <person name="Omosegbon O."/>
            <person name="Omery B."/>
            <person name="Crowell D.N."/>
        </authorList>
    </citation>
    <scope>FUNCTION</scope>
    <scope>INDUCTION</scope>
</reference>